<reference key="1">
    <citation type="journal article" date="2004" name="Genome Res.">
        <title>The status, quality, and expansion of the NIH full-length cDNA project: the Mammalian Gene Collection (MGC).</title>
        <authorList>
            <consortium name="The MGC Project Team"/>
        </authorList>
    </citation>
    <scope>NUCLEOTIDE SEQUENCE [LARGE SCALE MRNA]</scope>
    <source>
        <tissue>Kidney</tissue>
    </source>
</reference>
<accession>Q5RKI7</accession>
<comment type="function">
    <text evidence="1">Associates with SLC3A1/rBAT to form a functional heterodimeric complex that transports anionic and neutral amino acids across the apical plasma membrane of renal epithelium. Preferentially mediates exchange transport, but can also operate via facilitated diffusion. May act as a major transporter for L-cystine in late proximal tubules, ensuring its reabsorption from the luminal fluid in exchange for cytosolic L-glutamate or L-aspartate.</text>
</comment>
<comment type="catalytic activity">
    <reaction evidence="1">
        <text>L-cystine(out) + L-aspartate(in) = L-cystine(in) + L-aspartate(out)</text>
        <dbReference type="Rhea" id="RHEA:76299"/>
        <dbReference type="ChEBI" id="CHEBI:29991"/>
        <dbReference type="ChEBI" id="CHEBI:35491"/>
    </reaction>
</comment>
<comment type="catalytic activity">
    <reaction evidence="1">
        <text>L-cystine(out) = L-cystine(in)</text>
        <dbReference type="Rhea" id="RHEA:76303"/>
        <dbReference type="ChEBI" id="CHEBI:35491"/>
    </reaction>
</comment>
<comment type="catalytic activity">
    <reaction evidence="1">
        <text>L-aspartate(in) + L-glutamate(out) = L-aspartate(out) + L-glutamate(in)</text>
        <dbReference type="Rhea" id="RHEA:76307"/>
        <dbReference type="ChEBI" id="CHEBI:29985"/>
        <dbReference type="ChEBI" id="CHEBI:29991"/>
    </reaction>
</comment>
<comment type="catalytic activity">
    <reaction evidence="1">
        <text>L-aspartate(in) + L-glutamine(out) = L-aspartate(out) + L-glutamine(in)</text>
        <dbReference type="Rhea" id="RHEA:76311"/>
        <dbReference type="ChEBI" id="CHEBI:29991"/>
        <dbReference type="ChEBI" id="CHEBI:58359"/>
    </reaction>
</comment>
<comment type="catalytic activity">
    <reaction evidence="1">
        <text>L-aspartate(in) + L-methionine(out) = L-aspartate(out) + L-methionine(in)</text>
        <dbReference type="Rhea" id="RHEA:76315"/>
        <dbReference type="ChEBI" id="CHEBI:29991"/>
        <dbReference type="ChEBI" id="CHEBI:57844"/>
    </reaction>
</comment>
<comment type="catalytic activity">
    <reaction evidence="1">
        <text>L-leucine(out) + L-aspartate(in) = L-leucine(in) + L-aspartate(out)</text>
        <dbReference type="Rhea" id="RHEA:76319"/>
        <dbReference type="ChEBI" id="CHEBI:29991"/>
        <dbReference type="ChEBI" id="CHEBI:57427"/>
    </reaction>
</comment>
<comment type="catalytic activity">
    <reaction evidence="1">
        <text>L-valine(out) + L-aspartate(in) = L-valine(in) + L-aspartate(out)</text>
        <dbReference type="Rhea" id="RHEA:76323"/>
        <dbReference type="ChEBI" id="CHEBI:29991"/>
        <dbReference type="ChEBI" id="CHEBI:57762"/>
    </reaction>
</comment>
<comment type="catalytic activity">
    <reaction evidence="1">
        <text>L-aspartate(in) + L-phenylalanine(out) = L-aspartate(out) + L-phenylalanine(in)</text>
        <dbReference type="Rhea" id="RHEA:76327"/>
        <dbReference type="ChEBI" id="CHEBI:29991"/>
        <dbReference type="ChEBI" id="CHEBI:58095"/>
    </reaction>
</comment>
<comment type="catalytic activity">
    <reaction evidence="1">
        <text>L-tyrosine(out) + L-aspartate(in) = L-tyrosine(in) + L-aspartate(out)</text>
        <dbReference type="Rhea" id="RHEA:76331"/>
        <dbReference type="ChEBI" id="CHEBI:29991"/>
        <dbReference type="ChEBI" id="CHEBI:58315"/>
    </reaction>
</comment>
<comment type="catalytic activity">
    <reaction evidence="1">
        <text>L-tryptophan(out) + L-aspartate(in) = L-tryptophan(in) + L-aspartate(out)</text>
        <dbReference type="Rhea" id="RHEA:76335"/>
        <dbReference type="ChEBI" id="CHEBI:29991"/>
        <dbReference type="ChEBI" id="CHEBI:57912"/>
    </reaction>
</comment>
<comment type="subunit">
    <text evidence="1">Disulfide-linked heterodimer composed of the catalytic light subunit SLC7A13 and the heavy subunit SLC3A1.</text>
</comment>
<comment type="subcellular location">
    <subcellularLocation>
        <location evidence="1">Apical cell membrane</location>
        <topology evidence="2">Multi-pass membrane protein</topology>
    </subcellularLocation>
</comment>
<comment type="similarity">
    <text evidence="3">Belongs to the amino acid-polyamine-organocation (APC) superfamily.</text>
</comment>
<feature type="chain" id="PRO_0000330727" description="Solute carrier family 7 member 13">
    <location>
        <begin position="1"/>
        <end position="479"/>
    </location>
</feature>
<feature type="topological domain" description="Cytoplasmic" evidence="2">
    <location>
        <begin position="1"/>
        <end position="14"/>
    </location>
</feature>
<feature type="transmembrane region" description="Helical; Name=1" evidence="2">
    <location>
        <begin position="15"/>
        <end position="35"/>
    </location>
</feature>
<feature type="topological domain" description="Extracellular" evidence="2">
    <location>
        <begin position="36"/>
        <end position="47"/>
    </location>
</feature>
<feature type="transmembrane region" description="Helical; Name=2" evidence="2">
    <location>
        <begin position="48"/>
        <end position="68"/>
    </location>
</feature>
<feature type="topological domain" description="Cytoplasmic" evidence="2">
    <location>
        <begin position="69"/>
        <end position="89"/>
    </location>
</feature>
<feature type="transmembrane region" description="Helical; Name=3" evidence="2">
    <location>
        <begin position="90"/>
        <end position="110"/>
    </location>
</feature>
<feature type="topological domain" description="Extracellular" evidence="2">
    <location>
        <begin position="111"/>
        <end position="129"/>
    </location>
</feature>
<feature type="transmembrane region" description="Helical; Name=4" evidence="2">
    <location>
        <begin position="130"/>
        <end position="150"/>
    </location>
</feature>
<feature type="topological domain" description="Cytoplasmic" evidence="2">
    <location>
        <begin position="151"/>
        <end position="165"/>
    </location>
</feature>
<feature type="transmembrane region" description="Helical; Name=5" evidence="2">
    <location>
        <begin position="166"/>
        <end position="186"/>
    </location>
</feature>
<feature type="topological domain" description="Extracellular" evidence="2">
    <location>
        <begin position="187"/>
        <end position="208"/>
    </location>
</feature>
<feature type="transmembrane region" description="Helical; Name=6" evidence="2">
    <location>
        <begin position="209"/>
        <end position="229"/>
    </location>
</feature>
<feature type="topological domain" description="Cytoplasmic" evidence="2">
    <location>
        <begin position="230"/>
        <end position="242"/>
    </location>
</feature>
<feature type="transmembrane region" description="Helical; Name=7" evidence="2">
    <location>
        <begin position="243"/>
        <end position="263"/>
    </location>
</feature>
<feature type="topological domain" description="Extracellular" evidence="2">
    <location>
        <begin position="264"/>
        <end position="289"/>
    </location>
</feature>
<feature type="transmembrane region" description="Helical; Name=8" evidence="2">
    <location>
        <begin position="290"/>
        <end position="310"/>
    </location>
</feature>
<feature type="topological domain" description="Cytoplasmic" evidence="2">
    <location>
        <begin position="311"/>
        <end position="338"/>
    </location>
</feature>
<feature type="transmembrane region" description="Helical; Name=9" evidence="2">
    <location>
        <begin position="339"/>
        <end position="359"/>
    </location>
</feature>
<feature type="topological domain" description="Extracellular" evidence="2">
    <location>
        <position position="360"/>
    </location>
</feature>
<feature type="transmembrane region" description="Helical; Name=10" evidence="2">
    <location>
        <begin position="361"/>
        <end position="381"/>
    </location>
</feature>
<feature type="topological domain" description="Cytoplasmic" evidence="2">
    <location>
        <begin position="382"/>
        <end position="396"/>
    </location>
</feature>
<feature type="transmembrane region" description="Helical; Name=11" evidence="2">
    <location>
        <begin position="397"/>
        <end position="417"/>
    </location>
</feature>
<feature type="topological domain" description="Extracellular" evidence="2">
    <location>
        <begin position="418"/>
        <end position="423"/>
    </location>
</feature>
<feature type="transmembrane region" description="Helical; Name=12" evidence="2">
    <location>
        <begin position="424"/>
        <end position="444"/>
    </location>
</feature>
<feature type="topological domain" description="Cytoplasmic" evidence="2">
    <location>
        <begin position="445"/>
        <end position="479"/>
    </location>
</feature>
<organism>
    <name type="scientific">Rattus norvegicus</name>
    <name type="common">Rat</name>
    <dbReference type="NCBI Taxonomy" id="10116"/>
    <lineage>
        <taxon>Eukaryota</taxon>
        <taxon>Metazoa</taxon>
        <taxon>Chordata</taxon>
        <taxon>Craniata</taxon>
        <taxon>Vertebrata</taxon>
        <taxon>Euteleostomi</taxon>
        <taxon>Mammalia</taxon>
        <taxon>Eutheria</taxon>
        <taxon>Euarchontoglires</taxon>
        <taxon>Glires</taxon>
        <taxon>Rodentia</taxon>
        <taxon>Myomorpha</taxon>
        <taxon>Muroidea</taxon>
        <taxon>Muridae</taxon>
        <taxon>Murinae</taxon>
        <taxon>Rattus</taxon>
    </lineage>
</organism>
<keyword id="KW-0029">Amino-acid transport</keyword>
<keyword id="KW-0050">Antiport</keyword>
<keyword id="KW-1003">Cell membrane</keyword>
<keyword id="KW-1015">Disulfide bond</keyword>
<keyword id="KW-0472">Membrane</keyword>
<keyword id="KW-1185">Reference proteome</keyword>
<keyword id="KW-0812">Transmembrane</keyword>
<keyword id="KW-1133">Transmembrane helix</keyword>
<keyword id="KW-0813">Transport</keyword>
<protein>
    <recommendedName>
        <fullName>Solute carrier family 7 member 13</fullName>
    </recommendedName>
    <alternativeName>
        <fullName>Sodium-independent aspartate/glutamate transporter 1</fullName>
    </alternativeName>
</protein>
<evidence type="ECO:0000250" key="1">
    <source>
        <dbReference type="UniProtKB" id="Q91WN3"/>
    </source>
</evidence>
<evidence type="ECO:0000255" key="2"/>
<evidence type="ECO:0000305" key="3"/>
<name>S7A13_RAT</name>
<proteinExistence type="evidence at transcript level"/>
<gene>
    <name type="primary">Slc7a13</name>
</gene>
<dbReference type="EMBL" id="BC085796">
    <property type="protein sequence ID" value="AAH85796.1"/>
    <property type="molecule type" value="mRNA"/>
</dbReference>
<dbReference type="RefSeq" id="NP_001012100.1">
    <property type="nucleotide sequence ID" value="NM_001012100.2"/>
</dbReference>
<dbReference type="SMR" id="Q5RKI7"/>
<dbReference type="FunCoup" id="Q5RKI7">
    <property type="interactions" value="1"/>
</dbReference>
<dbReference type="STRING" id="10116.ENSRNOP00000032751"/>
<dbReference type="iPTMnet" id="Q5RKI7"/>
<dbReference type="PhosphoSitePlus" id="Q5RKI7"/>
<dbReference type="PaxDb" id="10116-ENSRNOP00000032751"/>
<dbReference type="Ensembl" id="ENSRNOT00000035685.7">
    <property type="protein sequence ID" value="ENSRNOP00000032751.4"/>
    <property type="gene ID" value="ENSRNOG00000024903.7"/>
</dbReference>
<dbReference type="GeneID" id="313089"/>
<dbReference type="KEGG" id="rno:313089"/>
<dbReference type="UCSC" id="RGD:1311633">
    <property type="organism name" value="rat"/>
</dbReference>
<dbReference type="AGR" id="RGD:1311633"/>
<dbReference type="CTD" id="157724"/>
<dbReference type="RGD" id="1311633">
    <property type="gene designation" value="Slc7a13"/>
</dbReference>
<dbReference type="eggNOG" id="KOG1287">
    <property type="taxonomic scope" value="Eukaryota"/>
</dbReference>
<dbReference type="GeneTree" id="ENSGT00940000162798"/>
<dbReference type="HOGENOM" id="CLU_007946_3_0_1"/>
<dbReference type="InParanoid" id="Q5RKI7"/>
<dbReference type="OrthoDB" id="29134at9989"/>
<dbReference type="PhylomeDB" id="Q5RKI7"/>
<dbReference type="TreeFam" id="TF313355"/>
<dbReference type="PRO" id="PR:Q5RKI7"/>
<dbReference type="Proteomes" id="UP000002494">
    <property type="component" value="Chromosome 5"/>
</dbReference>
<dbReference type="Bgee" id="ENSRNOG00000024903">
    <property type="expression patterns" value="Expressed in kidney and 9 other cell types or tissues"/>
</dbReference>
<dbReference type="GO" id="GO:0016324">
    <property type="term" value="C:apical plasma membrane"/>
    <property type="evidence" value="ECO:0000266"/>
    <property type="project" value="RGD"/>
</dbReference>
<dbReference type="GO" id="GO:0015297">
    <property type="term" value="F:antiporter activity"/>
    <property type="evidence" value="ECO:0007669"/>
    <property type="project" value="UniProtKB-KW"/>
</dbReference>
<dbReference type="GO" id="GO:0015179">
    <property type="term" value="F:L-amino acid transmembrane transporter activity"/>
    <property type="evidence" value="ECO:0000318"/>
    <property type="project" value="GO_Central"/>
</dbReference>
<dbReference type="GO" id="GO:0046982">
    <property type="term" value="F:protein heterodimerization activity"/>
    <property type="evidence" value="ECO:0000266"/>
    <property type="project" value="RGD"/>
</dbReference>
<dbReference type="GO" id="GO:0003333">
    <property type="term" value="P:amino acid transmembrane transport"/>
    <property type="evidence" value="ECO:0000318"/>
    <property type="project" value="GO_Central"/>
</dbReference>
<dbReference type="GO" id="GO:0015810">
    <property type="term" value="P:aspartate transmembrane transport"/>
    <property type="evidence" value="ECO:0000266"/>
    <property type="project" value="RGD"/>
</dbReference>
<dbReference type="GO" id="GO:0015811">
    <property type="term" value="P:L-cystine transport"/>
    <property type="evidence" value="ECO:0000266"/>
    <property type="project" value="RGD"/>
</dbReference>
<dbReference type="GO" id="GO:0015813">
    <property type="term" value="P:L-glutamate transmembrane transport"/>
    <property type="evidence" value="ECO:0000266"/>
    <property type="project" value="RGD"/>
</dbReference>
<dbReference type="FunFam" id="1.20.1740.10:FF:000036">
    <property type="entry name" value="Solute carrier family 7 member 13"/>
    <property type="match status" value="1"/>
</dbReference>
<dbReference type="Gene3D" id="1.20.1740.10">
    <property type="entry name" value="Amino acid/polyamine transporter I"/>
    <property type="match status" value="1"/>
</dbReference>
<dbReference type="InterPro" id="IPR002293">
    <property type="entry name" value="AA/rel_permease1"/>
</dbReference>
<dbReference type="InterPro" id="IPR050598">
    <property type="entry name" value="AminoAcid_Transporter"/>
</dbReference>
<dbReference type="PANTHER" id="PTHR11785">
    <property type="entry name" value="AMINO ACID TRANSPORTER"/>
    <property type="match status" value="1"/>
</dbReference>
<dbReference type="PANTHER" id="PTHR11785:SF238">
    <property type="entry name" value="SOLUTE CARRIER FAMILY 7 MEMBER 13"/>
    <property type="match status" value="1"/>
</dbReference>
<dbReference type="Pfam" id="PF13520">
    <property type="entry name" value="AA_permease_2"/>
    <property type="match status" value="1"/>
</dbReference>
<dbReference type="PIRSF" id="PIRSF006060">
    <property type="entry name" value="AA_transporter"/>
    <property type="match status" value="1"/>
</dbReference>
<sequence length="479" mass="53551">MAMDIEKKIYLKRQLGYFWGTNFLIINIIGAGIFVSPKGVLQYSSMNVGVSLCVWVFCAVLSMTSTLCAAEIGITFPYTVAHYYFLKRCFGPFVAFLRLWTSLFTGPGVLASQALLLAEYGIQPFYPSCSAPAVPKKCLALAMLWIVGILNSRGVKELSWLQTVSMVLKMGILSFISLSGLFLLVTGRKENVRRLQNAFDAEFPEVSRLIEAIFQGYFAFSGGGSFTYVAGELKEPSKTIPRCIFTALPLVTVVYLLANLSYLTVLSPQELLSSDAVALTWTDRVIPQLTWSVPFAISASLFSNLVTSVFETSRTSYIASRNGQLPLLCSTLNVHSSPFIAVLLDVSMGSIAIVLTNLIELINYLFFVFSIWTVLSVIGILKLRYQEPNLHRPYKVFSPFLFITAAISLSMVLIPLIKSPKMQYIYVFLFFLGGLLFYVPLIHFKLKLIWFQKLTCYLQLLFNICIPDVSDEHVAEEES</sequence>